<protein>
    <recommendedName>
        <fullName evidence="1">Aspartate--tRNA(Asp/Asn) ligase</fullName>
        <ecNumber evidence="1">6.1.1.23</ecNumber>
    </recommendedName>
    <alternativeName>
        <fullName evidence="1">Aspartyl-tRNA synthetase</fullName>
        <shortName evidence="1">AspRS</shortName>
    </alternativeName>
    <alternativeName>
        <fullName evidence="1">Non-discriminating aspartyl-tRNA synthetase</fullName>
        <shortName evidence="1">ND-AspRS</shortName>
    </alternativeName>
</protein>
<comment type="function">
    <text evidence="1">Aspartyl-tRNA synthetase with relaxed tRNA specificity since it is able to aspartylate not only its cognate tRNA(Asp) but also tRNA(Asn). Reaction proceeds in two steps: L-aspartate is first activated by ATP to form Asp-AMP and then transferred to the acceptor end of tRNA(Asp/Asn).</text>
</comment>
<comment type="catalytic activity">
    <reaction evidence="1">
        <text>tRNA(Asx) + L-aspartate + ATP = L-aspartyl-tRNA(Asx) + AMP + diphosphate</text>
        <dbReference type="Rhea" id="RHEA:18349"/>
        <dbReference type="Rhea" id="RHEA-COMP:9710"/>
        <dbReference type="Rhea" id="RHEA-COMP:9711"/>
        <dbReference type="ChEBI" id="CHEBI:29991"/>
        <dbReference type="ChEBI" id="CHEBI:30616"/>
        <dbReference type="ChEBI" id="CHEBI:33019"/>
        <dbReference type="ChEBI" id="CHEBI:78442"/>
        <dbReference type="ChEBI" id="CHEBI:78516"/>
        <dbReference type="ChEBI" id="CHEBI:456215"/>
        <dbReference type="EC" id="6.1.1.23"/>
    </reaction>
</comment>
<comment type="subunit">
    <text evidence="1">Homodimer.</text>
</comment>
<comment type="subcellular location">
    <subcellularLocation>
        <location evidence="1">Cytoplasm</location>
    </subcellularLocation>
</comment>
<comment type="similarity">
    <text evidence="1">Belongs to the class-II aminoacyl-tRNA synthetase family. Type 1 subfamily.</text>
</comment>
<reference key="1">
    <citation type="journal article" date="2008" name="Mol. Biol. Evol.">
        <title>Genome evolution of Wolbachia strain wPip from the Culex pipiens group.</title>
        <authorList>
            <person name="Klasson L."/>
            <person name="Walker T."/>
            <person name="Sebaihia M."/>
            <person name="Sanders M.J."/>
            <person name="Quail M.A."/>
            <person name="Lord A."/>
            <person name="Sanders S."/>
            <person name="Earl J."/>
            <person name="O'Neill S.L."/>
            <person name="Thomson N."/>
            <person name="Sinkins S.P."/>
            <person name="Parkhill J."/>
        </authorList>
    </citation>
    <scope>NUCLEOTIDE SEQUENCE [LARGE SCALE GENOMIC DNA]</scope>
    <source>
        <strain>wPip</strain>
    </source>
</reference>
<feature type="chain" id="PRO_1000091060" description="Aspartate--tRNA(Asp/Asn) ligase">
    <location>
        <begin position="1"/>
        <end position="600"/>
    </location>
</feature>
<feature type="region of interest" description="Aspartate" evidence="1">
    <location>
        <begin position="211"/>
        <end position="214"/>
    </location>
</feature>
<feature type="binding site" evidence="1">
    <location>
        <position position="187"/>
    </location>
    <ligand>
        <name>L-aspartate</name>
        <dbReference type="ChEBI" id="CHEBI:29991"/>
    </ligand>
</feature>
<feature type="binding site" evidence="1">
    <location>
        <begin position="233"/>
        <end position="235"/>
    </location>
    <ligand>
        <name>ATP</name>
        <dbReference type="ChEBI" id="CHEBI:30616"/>
    </ligand>
</feature>
<feature type="binding site" evidence="1">
    <location>
        <position position="233"/>
    </location>
    <ligand>
        <name>L-aspartate</name>
        <dbReference type="ChEBI" id="CHEBI:29991"/>
    </ligand>
</feature>
<feature type="binding site" evidence="1">
    <location>
        <position position="463"/>
    </location>
    <ligand>
        <name>L-aspartate</name>
        <dbReference type="ChEBI" id="CHEBI:29991"/>
    </ligand>
</feature>
<feature type="binding site" evidence="1">
    <location>
        <position position="497"/>
    </location>
    <ligand>
        <name>ATP</name>
        <dbReference type="ChEBI" id="CHEBI:30616"/>
    </ligand>
</feature>
<feature type="binding site" evidence="1">
    <location>
        <position position="504"/>
    </location>
    <ligand>
        <name>L-aspartate</name>
        <dbReference type="ChEBI" id="CHEBI:29991"/>
    </ligand>
</feature>
<feature type="binding site" evidence="1">
    <location>
        <begin position="549"/>
        <end position="552"/>
    </location>
    <ligand>
        <name>ATP</name>
        <dbReference type="ChEBI" id="CHEBI:30616"/>
    </ligand>
</feature>
<feature type="site" description="Important for tRNA non-discrimination" evidence="1">
    <location>
        <position position="33"/>
    </location>
</feature>
<organism>
    <name type="scientific">Wolbachia pipientis subsp. Culex pipiens (strain wPip)</name>
    <dbReference type="NCBI Taxonomy" id="570417"/>
    <lineage>
        <taxon>Bacteria</taxon>
        <taxon>Pseudomonadati</taxon>
        <taxon>Pseudomonadota</taxon>
        <taxon>Alphaproteobacteria</taxon>
        <taxon>Rickettsiales</taxon>
        <taxon>Anaplasmataceae</taxon>
        <taxon>Wolbachieae</taxon>
        <taxon>Wolbachia</taxon>
    </lineage>
</organism>
<gene>
    <name evidence="1" type="primary">aspS</name>
    <name type="ordered locus">WP0387</name>
</gene>
<keyword id="KW-0030">Aminoacyl-tRNA synthetase</keyword>
<keyword id="KW-0067">ATP-binding</keyword>
<keyword id="KW-0963">Cytoplasm</keyword>
<keyword id="KW-0436">Ligase</keyword>
<keyword id="KW-0547">Nucleotide-binding</keyword>
<keyword id="KW-0648">Protein biosynthesis</keyword>
<accession>B3CPJ5</accession>
<evidence type="ECO:0000255" key="1">
    <source>
        <dbReference type="HAMAP-Rule" id="MF_00044"/>
    </source>
</evidence>
<dbReference type="EC" id="6.1.1.23" evidence="1"/>
<dbReference type="EMBL" id="AM999887">
    <property type="protein sequence ID" value="CAQ54495.1"/>
    <property type="molecule type" value="Genomic_DNA"/>
</dbReference>
<dbReference type="RefSeq" id="WP_012481816.1">
    <property type="nucleotide sequence ID" value="NC_010981.1"/>
</dbReference>
<dbReference type="SMR" id="B3CPJ5"/>
<dbReference type="KEGG" id="wpi:WP0387"/>
<dbReference type="eggNOG" id="COG0173">
    <property type="taxonomic scope" value="Bacteria"/>
</dbReference>
<dbReference type="HOGENOM" id="CLU_014330_3_2_5"/>
<dbReference type="Proteomes" id="UP000008814">
    <property type="component" value="Chromosome"/>
</dbReference>
<dbReference type="GO" id="GO:0005737">
    <property type="term" value="C:cytoplasm"/>
    <property type="evidence" value="ECO:0007669"/>
    <property type="project" value="UniProtKB-SubCell"/>
</dbReference>
<dbReference type="GO" id="GO:0004815">
    <property type="term" value="F:aspartate-tRNA ligase activity"/>
    <property type="evidence" value="ECO:0007669"/>
    <property type="project" value="UniProtKB-UniRule"/>
</dbReference>
<dbReference type="GO" id="GO:0050560">
    <property type="term" value="F:aspartate-tRNA(Asn) ligase activity"/>
    <property type="evidence" value="ECO:0007669"/>
    <property type="project" value="UniProtKB-EC"/>
</dbReference>
<dbReference type="GO" id="GO:0005524">
    <property type="term" value="F:ATP binding"/>
    <property type="evidence" value="ECO:0007669"/>
    <property type="project" value="UniProtKB-UniRule"/>
</dbReference>
<dbReference type="GO" id="GO:0003676">
    <property type="term" value="F:nucleic acid binding"/>
    <property type="evidence" value="ECO:0007669"/>
    <property type="project" value="InterPro"/>
</dbReference>
<dbReference type="GO" id="GO:0006422">
    <property type="term" value="P:aspartyl-tRNA aminoacylation"/>
    <property type="evidence" value="ECO:0007669"/>
    <property type="project" value="UniProtKB-UniRule"/>
</dbReference>
<dbReference type="CDD" id="cd00777">
    <property type="entry name" value="AspRS_core"/>
    <property type="match status" value="1"/>
</dbReference>
<dbReference type="CDD" id="cd04317">
    <property type="entry name" value="EcAspRS_like_N"/>
    <property type="match status" value="1"/>
</dbReference>
<dbReference type="Gene3D" id="3.30.930.10">
    <property type="entry name" value="Bira Bifunctional Protein, Domain 2"/>
    <property type="match status" value="1"/>
</dbReference>
<dbReference type="Gene3D" id="3.30.1360.30">
    <property type="entry name" value="GAD-like domain"/>
    <property type="match status" value="1"/>
</dbReference>
<dbReference type="Gene3D" id="2.40.50.140">
    <property type="entry name" value="Nucleic acid-binding proteins"/>
    <property type="match status" value="1"/>
</dbReference>
<dbReference type="HAMAP" id="MF_00044">
    <property type="entry name" value="Asp_tRNA_synth_type1"/>
    <property type="match status" value="1"/>
</dbReference>
<dbReference type="InterPro" id="IPR004364">
    <property type="entry name" value="Aa-tRNA-synt_II"/>
</dbReference>
<dbReference type="InterPro" id="IPR006195">
    <property type="entry name" value="aa-tRNA-synth_II"/>
</dbReference>
<dbReference type="InterPro" id="IPR045864">
    <property type="entry name" value="aa-tRNA-synth_II/BPL/LPL"/>
</dbReference>
<dbReference type="InterPro" id="IPR004524">
    <property type="entry name" value="Asp-tRNA-ligase_1"/>
</dbReference>
<dbReference type="InterPro" id="IPR047089">
    <property type="entry name" value="Asp-tRNA-ligase_1_N"/>
</dbReference>
<dbReference type="InterPro" id="IPR002312">
    <property type="entry name" value="Asp/Asn-tRNA-synth_IIb"/>
</dbReference>
<dbReference type="InterPro" id="IPR047090">
    <property type="entry name" value="AspRS_core"/>
</dbReference>
<dbReference type="InterPro" id="IPR004115">
    <property type="entry name" value="GAD-like_sf"/>
</dbReference>
<dbReference type="InterPro" id="IPR029351">
    <property type="entry name" value="GAD_dom"/>
</dbReference>
<dbReference type="InterPro" id="IPR012340">
    <property type="entry name" value="NA-bd_OB-fold"/>
</dbReference>
<dbReference type="InterPro" id="IPR004365">
    <property type="entry name" value="NA-bd_OB_tRNA"/>
</dbReference>
<dbReference type="NCBIfam" id="TIGR00459">
    <property type="entry name" value="aspS_bact"/>
    <property type="match status" value="1"/>
</dbReference>
<dbReference type="NCBIfam" id="NF001750">
    <property type="entry name" value="PRK00476.1"/>
    <property type="match status" value="1"/>
</dbReference>
<dbReference type="PANTHER" id="PTHR22594:SF5">
    <property type="entry name" value="ASPARTATE--TRNA LIGASE, MITOCHONDRIAL"/>
    <property type="match status" value="1"/>
</dbReference>
<dbReference type="PANTHER" id="PTHR22594">
    <property type="entry name" value="ASPARTYL/LYSYL-TRNA SYNTHETASE"/>
    <property type="match status" value="1"/>
</dbReference>
<dbReference type="Pfam" id="PF02938">
    <property type="entry name" value="GAD"/>
    <property type="match status" value="1"/>
</dbReference>
<dbReference type="Pfam" id="PF00152">
    <property type="entry name" value="tRNA-synt_2"/>
    <property type="match status" value="1"/>
</dbReference>
<dbReference type="Pfam" id="PF01336">
    <property type="entry name" value="tRNA_anti-codon"/>
    <property type="match status" value="1"/>
</dbReference>
<dbReference type="PRINTS" id="PR01042">
    <property type="entry name" value="TRNASYNTHASP"/>
</dbReference>
<dbReference type="SUPFAM" id="SSF55681">
    <property type="entry name" value="Class II aaRS and biotin synthetases"/>
    <property type="match status" value="1"/>
</dbReference>
<dbReference type="SUPFAM" id="SSF55261">
    <property type="entry name" value="GAD domain-like"/>
    <property type="match status" value="1"/>
</dbReference>
<dbReference type="SUPFAM" id="SSF50249">
    <property type="entry name" value="Nucleic acid-binding proteins"/>
    <property type="match status" value="1"/>
</dbReference>
<dbReference type="PROSITE" id="PS50862">
    <property type="entry name" value="AA_TRNA_LIGASE_II"/>
    <property type="match status" value="1"/>
</dbReference>
<name>SYDND_WOLPP</name>
<sequence length="600" mass="68570">MNCYKTHECNELRKNDVEKEVTLSGWLYRKRDHGNLIFVDLRDFHGITQLVFNNDKDFFDEISNLKSESVITVTGIVKARTEDTVNSSISTGEIEVIVSNLQVESEVEFHCDEEIAKEERSILASIAGEQEYPENMRFKYRFLDLRREKVRNNIILRSQIISELRRLMIEQGFLDIQTPILTASSPEGARDYLVPSRLNPGKFYALPQAPQIFKQLLMVSGFDKYFQIAPCFRDEDARADRSPGEFYQLDLEMSFVTQEDIFQVIESTLYKVFAKFSRKSVDKDFPRITYKEAMLKYGSDKPDLRNPLLISDVTEIFRDSEFNIFKSNIERGMVVRAIPAPKTAEEPRSFFDKKIEHAQKEFGAKGLGYITFDKDGIAKGPIAKFLDDNRLNSIKEITNVKPGDSVFFASDKENEAATIAGKVRTLLGSELGLIDDDIFKFCWIIDFPYFVYDDKSKKIDFFHNPFSMPHGGLKDLEEKDPLDILAYQYDLVCNGIELSSGAIRNNKLNIMYRAFAIAGYSKEEVDTKFGALVRAFRFGAPPHGGIAPGVDRMVMLLADEPNIREVICFPMNQQGEDVLMGAPSKVDDKHLRELSLKVVE</sequence>
<proteinExistence type="inferred from homology"/>